<gene>
    <name evidence="1" type="primary">htpX</name>
    <name type="ordered locus">KRH_05530</name>
</gene>
<comment type="cofactor">
    <cofactor evidence="1">
        <name>Zn(2+)</name>
        <dbReference type="ChEBI" id="CHEBI:29105"/>
    </cofactor>
    <text evidence="1">Binds 1 zinc ion per subunit.</text>
</comment>
<comment type="subcellular location">
    <subcellularLocation>
        <location evidence="1">Cell membrane</location>
        <topology evidence="1">Multi-pass membrane protein</topology>
    </subcellularLocation>
</comment>
<comment type="similarity">
    <text evidence="1">Belongs to the peptidase M48B family.</text>
</comment>
<accession>B2GI45</accession>
<keyword id="KW-1003">Cell membrane</keyword>
<keyword id="KW-0378">Hydrolase</keyword>
<keyword id="KW-0472">Membrane</keyword>
<keyword id="KW-0479">Metal-binding</keyword>
<keyword id="KW-0482">Metalloprotease</keyword>
<keyword id="KW-0645">Protease</keyword>
<keyword id="KW-1185">Reference proteome</keyword>
<keyword id="KW-0812">Transmembrane</keyword>
<keyword id="KW-1133">Transmembrane helix</keyword>
<keyword id="KW-0862">Zinc</keyword>
<sequence>MHRHYNGLKTVLLLGGMWVVLLAIGWAIAGATRNSAFIMIFAVVGLLGTAYSYWNSDKLAIRSMRAVPVTPQQAPAMYRIVHELSQAAGQPMPRLFIAPTMSPNAFATGRNPEHAAVCCTEGILQLLDERELRGVLGHELMHVYNRDILTSSVAAAVAGIITSAAQMLQFAAIFGGGRGNDNRGGNPLVGLLLALLAPLAATVIQLAISRTREYDADEDGSKLTGDPLALASALRKIEGGASQFPMDPEDQKVVNTSHLMIANPFRGGAVTGLFRTHPATADRIARLENMARAGGGNPAGR</sequence>
<protein>
    <recommendedName>
        <fullName evidence="1">Protease HtpX homolog</fullName>
        <ecNumber evidence="1">3.4.24.-</ecNumber>
    </recommendedName>
</protein>
<organism>
    <name type="scientific">Kocuria rhizophila (strain ATCC 9341 / DSM 348 / NBRC 103217 / DC2201)</name>
    <dbReference type="NCBI Taxonomy" id="378753"/>
    <lineage>
        <taxon>Bacteria</taxon>
        <taxon>Bacillati</taxon>
        <taxon>Actinomycetota</taxon>
        <taxon>Actinomycetes</taxon>
        <taxon>Micrococcales</taxon>
        <taxon>Micrococcaceae</taxon>
        <taxon>Kocuria</taxon>
    </lineage>
</organism>
<name>HTPX_KOCRD</name>
<dbReference type="EC" id="3.4.24.-" evidence="1"/>
<dbReference type="EMBL" id="AP009152">
    <property type="protein sequence ID" value="BAG28900.1"/>
    <property type="molecule type" value="Genomic_DNA"/>
</dbReference>
<dbReference type="RefSeq" id="WP_012397626.1">
    <property type="nucleotide sequence ID" value="NC_010617.1"/>
</dbReference>
<dbReference type="STRING" id="378753.KRH_05530"/>
<dbReference type="KEGG" id="krh:KRH_05530"/>
<dbReference type="eggNOG" id="COG0501">
    <property type="taxonomic scope" value="Bacteria"/>
</dbReference>
<dbReference type="HOGENOM" id="CLU_042266_3_1_11"/>
<dbReference type="OrthoDB" id="15218at2"/>
<dbReference type="Proteomes" id="UP000008838">
    <property type="component" value="Chromosome"/>
</dbReference>
<dbReference type="GO" id="GO:0005886">
    <property type="term" value="C:plasma membrane"/>
    <property type="evidence" value="ECO:0007669"/>
    <property type="project" value="UniProtKB-SubCell"/>
</dbReference>
<dbReference type="GO" id="GO:0004222">
    <property type="term" value="F:metalloendopeptidase activity"/>
    <property type="evidence" value="ECO:0007669"/>
    <property type="project" value="UniProtKB-UniRule"/>
</dbReference>
<dbReference type="GO" id="GO:0008270">
    <property type="term" value="F:zinc ion binding"/>
    <property type="evidence" value="ECO:0007669"/>
    <property type="project" value="UniProtKB-UniRule"/>
</dbReference>
<dbReference type="GO" id="GO:0006508">
    <property type="term" value="P:proteolysis"/>
    <property type="evidence" value="ECO:0007669"/>
    <property type="project" value="UniProtKB-KW"/>
</dbReference>
<dbReference type="Gene3D" id="3.30.2010.10">
    <property type="entry name" value="Metalloproteases ('zincins'), catalytic domain"/>
    <property type="match status" value="1"/>
</dbReference>
<dbReference type="HAMAP" id="MF_00188">
    <property type="entry name" value="Pept_M48_protease_HtpX"/>
    <property type="match status" value="1"/>
</dbReference>
<dbReference type="InterPro" id="IPR050083">
    <property type="entry name" value="HtpX_protease"/>
</dbReference>
<dbReference type="InterPro" id="IPR022919">
    <property type="entry name" value="Pept_M48_protease_HtpX"/>
</dbReference>
<dbReference type="InterPro" id="IPR001915">
    <property type="entry name" value="Peptidase_M48"/>
</dbReference>
<dbReference type="NCBIfam" id="NF002839">
    <property type="entry name" value="PRK03072.1"/>
    <property type="match status" value="1"/>
</dbReference>
<dbReference type="PANTHER" id="PTHR43221">
    <property type="entry name" value="PROTEASE HTPX"/>
    <property type="match status" value="1"/>
</dbReference>
<dbReference type="PANTHER" id="PTHR43221:SF1">
    <property type="entry name" value="PROTEASE HTPX"/>
    <property type="match status" value="1"/>
</dbReference>
<dbReference type="Pfam" id="PF01435">
    <property type="entry name" value="Peptidase_M48"/>
    <property type="match status" value="1"/>
</dbReference>
<dbReference type="PROSITE" id="PS00142">
    <property type="entry name" value="ZINC_PROTEASE"/>
    <property type="match status" value="1"/>
</dbReference>
<evidence type="ECO:0000255" key="1">
    <source>
        <dbReference type="HAMAP-Rule" id="MF_00188"/>
    </source>
</evidence>
<reference key="1">
    <citation type="journal article" date="2008" name="J. Bacteriol.">
        <title>Complete genome sequence of the soil actinomycete Kocuria rhizophila.</title>
        <authorList>
            <person name="Takarada H."/>
            <person name="Sekine M."/>
            <person name="Kosugi H."/>
            <person name="Matsuo Y."/>
            <person name="Fujisawa T."/>
            <person name="Omata S."/>
            <person name="Kishi E."/>
            <person name="Shimizu A."/>
            <person name="Tsukatani N."/>
            <person name="Tanikawa S."/>
            <person name="Fujita N."/>
            <person name="Harayama S."/>
        </authorList>
    </citation>
    <scope>NUCLEOTIDE SEQUENCE [LARGE SCALE GENOMIC DNA]</scope>
    <source>
        <strain>ATCC 9341 / DSM 348 / NBRC 103217 / DC2201</strain>
    </source>
</reference>
<proteinExistence type="inferred from homology"/>
<feature type="chain" id="PRO_1000098822" description="Protease HtpX homolog">
    <location>
        <begin position="1"/>
        <end position="301"/>
    </location>
</feature>
<feature type="transmembrane region" description="Helical" evidence="1">
    <location>
        <begin position="11"/>
        <end position="31"/>
    </location>
</feature>
<feature type="transmembrane region" description="Helical" evidence="1">
    <location>
        <begin position="34"/>
        <end position="54"/>
    </location>
</feature>
<feature type="transmembrane region" description="Helical" evidence="1">
    <location>
        <begin position="154"/>
        <end position="174"/>
    </location>
</feature>
<feature type="transmembrane region" description="Helical" evidence="1">
    <location>
        <begin position="188"/>
        <end position="208"/>
    </location>
</feature>
<feature type="active site" evidence="1">
    <location>
        <position position="139"/>
    </location>
</feature>
<feature type="binding site" evidence="1">
    <location>
        <position position="138"/>
    </location>
    <ligand>
        <name>Zn(2+)</name>
        <dbReference type="ChEBI" id="CHEBI:29105"/>
        <note>catalytic</note>
    </ligand>
</feature>
<feature type="binding site" evidence="1">
    <location>
        <position position="142"/>
    </location>
    <ligand>
        <name>Zn(2+)</name>
        <dbReference type="ChEBI" id="CHEBI:29105"/>
        <note>catalytic</note>
    </ligand>
</feature>
<feature type="binding site" evidence="1">
    <location>
        <position position="213"/>
    </location>
    <ligand>
        <name>Zn(2+)</name>
        <dbReference type="ChEBI" id="CHEBI:29105"/>
        <note>catalytic</note>
    </ligand>
</feature>